<proteinExistence type="evidence at transcript level"/>
<organism>
    <name type="scientific">Capra hircus</name>
    <name type="common">Goat</name>
    <dbReference type="NCBI Taxonomy" id="9925"/>
    <lineage>
        <taxon>Eukaryota</taxon>
        <taxon>Metazoa</taxon>
        <taxon>Chordata</taxon>
        <taxon>Craniata</taxon>
        <taxon>Vertebrata</taxon>
        <taxon>Euteleostomi</taxon>
        <taxon>Mammalia</taxon>
        <taxon>Eutheria</taxon>
        <taxon>Laurasiatheria</taxon>
        <taxon>Artiodactyla</taxon>
        <taxon>Ruminantia</taxon>
        <taxon>Pecora</taxon>
        <taxon>Bovidae</taxon>
        <taxon>Caprinae</taxon>
        <taxon>Capra</taxon>
    </lineage>
</organism>
<sequence length="223" mass="26389">MKFFIFTCLLAVALAKHKMEHVSSSEEPINIFQEIYKQEKNMAIHPRKEKLCTTSCEEVVRNANEEEYSIRSSSEESAEVAPEEIKITVDDKHYQKALNEINQFYQKFPQYLQYPYQGPIVLNPWDQVKRNAGPFTPTVNREQLSTSEENSKKTIDMESTEVFTKKTKLTEEEKNRLNFLKKISQYYQKFAWPQYLKTVDQHQKAMKPWTQPKTNAIPYVRYL</sequence>
<name>CASA2_CAPHI</name>
<feature type="signal peptide" evidence="1">
    <location>
        <begin position="1"/>
        <end position="15"/>
    </location>
</feature>
<feature type="chain" id="PRO_0000004463" description="Alpha-S2-casein">
    <location>
        <begin position="16"/>
        <end position="223"/>
    </location>
</feature>
<feature type="repeat">
    <location>
        <begin position="77"/>
        <end position="141"/>
    </location>
</feature>
<feature type="repeat">
    <location>
        <begin position="159"/>
        <end position="223"/>
    </location>
</feature>
<feature type="modified residue" description="Phosphoserine" evidence="3">
    <location>
        <position position="23"/>
    </location>
</feature>
<feature type="modified residue" description="Phosphoserine" evidence="3">
    <location>
        <position position="24"/>
    </location>
</feature>
<feature type="modified residue" description="Phosphoserine" evidence="3">
    <location>
        <position position="25"/>
    </location>
</feature>
<feature type="modified residue" description="Phosphoserine" evidence="3">
    <location>
        <position position="72"/>
    </location>
</feature>
<feature type="modified residue" description="Phosphoserine" evidence="3">
    <location>
        <position position="73"/>
    </location>
</feature>
<feature type="modified residue" description="Phosphoserine" evidence="3">
    <location>
        <position position="74"/>
    </location>
</feature>
<feature type="modified residue" description="Phosphoserine" evidence="3">
    <location>
        <position position="77"/>
    </location>
</feature>
<feature type="modified residue" description="Phosphoserine" evidence="2">
    <location>
        <position position="145"/>
    </location>
</feature>
<feature type="modified residue" description="Phosphoserine" evidence="2">
    <location>
        <position position="147"/>
    </location>
</feature>
<feature type="modified residue" description="Phosphoserine" evidence="2">
    <location>
        <position position="151"/>
    </location>
</feature>
<feature type="modified residue" description="Phosphoserine" evidence="3">
    <location>
        <position position="159"/>
    </location>
</feature>
<feature type="sequence variant" description="In allele F." evidence="4">
    <original>V</original>
    <variation>I</variation>
    <location>
        <position position="22"/>
    </location>
</feature>
<feature type="sequence variant" description="In allele B." evidence="7">
    <original>E</original>
    <variation>K</variation>
    <location>
        <position position="79"/>
    </location>
</feature>
<feature type="sequence variant" description="In allele 0.">
    <original>E</original>
    <variation>K</variation>
    <location>
        <position position="161"/>
    </location>
</feature>
<feature type="sequence variant" description="In allele C and allele E." evidence="5 6">
    <original>K</original>
    <variation>I</variation>
    <location>
        <position position="182"/>
    </location>
</feature>
<feature type="sequence variant" description="In allele E." evidence="5">
    <original>P</original>
    <variation>R</variation>
    <location>
        <position position="208"/>
    </location>
</feature>
<accession>P33049</accession>
<accession>Q9GK07</accession>
<accession>Q9MYU6</accession>
<accession>Q9MYU7</accession>
<accession>Q9TTQ7</accession>
<comment type="function">
    <text>Important role in the capacity of milk to transport calcium phosphate.</text>
</comment>
<comment type="subcellular location">
    <subcellularLocation>
        <location>Secreted</location>
    </subcellularLocation>
</comment>
<comment type="tissue specificity">
    <text>Mammary gland specific. Secreted in milk.</text>
</comment>
<comment type="polymorphism">
    <text>The frequencies of the A, B and C alleles is estimated to be 0.85, 0.04 and 0.11 in the French dairy breeds 'Alpine' and 'Saanen'.</text>
</comment>
<comment type="similarity">
    <text evidence="8">Belongs to the alpha-casein family.</text>
</comment>
<evidence type="ECO:0000250" key="1"/>
<evidence type="ECO:0000250" key="2">
    <source>
        <dbReference type="UniProtKB" id="O97944"/>
    </source>
</evidence>
<evidence type="ECO:0000250" key="3">
    <source>
        <dbReference type="UniProtKB" id="P02663"/>
    </source>
</evidence>
<evidence type="ECO:0000269" key="4">
    <source>
    </source>
</evidence>
<evidence type="ECO:0000269" key="5">
    <source>
    </source>
</evidence>
<evidence type="ECO:0000269" key="6">
    <source>
    </source>
</evidence>
<evidence type="ECO:0000269" key="7">
    <source ref="2"/>
</evidence>
<evidence type="ECO:0000305" key="8"/>
<gene>
    <name type="primary">CSN1S2</name>
</gene>
<keyword id="KW-0494">Milk protein</keyword>
<keyword id="KW-0597">Phosphoprotein</keyword>
<keyword id="KW-1185">Reference proteome</keyword>
<keyword id="KW-0677">Repeat</keyword>
<keyword id="KW-0964">Secreted</keyword>
<keyword id="KW-0732">Signal</keyword>
<protein>
    <recommendedName>
        <fullName>Alpha-S2-casein</fullName>
        <shortName>Alpha-S2-CN</shortName>
    </recommendedName>
</protein>
<dbReference type="EMBL" id="X65160">
    <property type="protein sequence ID" value="CAA46278.1"/>
    <property type="molecule type" value="mRNA"/>
</dbReference>
<dbReference type="EMBL" id="S74171">
    <property type="protein sequence ID" value="AAB32166.1"/>
    <property type="molecule type" value="Genomic_DNA"/>
</dbReference>
<dbReference type="EMBL" id="AJ249995">
    <property type="protein sequence ID" value="CAB59920.1"/>
    <property type="molecule type" value="mRNA"/>
</dbReference>
<dbReference type="EMBL" id="AJ289715">
    <property type="protein sequence ID" value="CAB94235.1"/>
    <property type="molecule type" value="mRNA"/>
</dbReference>
<dbReference type="EMBL" id="AJ289716">
    <property type="protein sequence ID" value="CAB94236.1"/>
    <property type="molecule type" value="mRNA"/>
</dbReference>
<dbReference type="EMBL" id="AJ297310">
    <property type="protein sequence ID" value="CAC21704.2"/>
    <property type="molecule type" value="Genomic_DNA"/>
</dbReference>
<dbReference type="EMBL" id="AJ242526">
    <property type="protein sequence ID" value="CAC21704.2"/>
    <property type="status" value="JOINED"/>
    <property type="molecule type" value="Genomic_DNA"/>
</dbReference>
<dbReference type="EMBL" id="AJ242528">
    <property type="protein sequence ID" value="CAC21704.2"/>
    <property type="status" value="JOINED"/>
    <property type="molecule type" value="Genomic_DNA"/>
</dbReference>
<dbReference type="EMBL" id="AJ242527">
    <property type="protein sequence ID" value="CAC21704.2"/>
    <property type="status" value="JOINED"/>
    <property type="molecule type" value="Genomic_DNA"/>
</dbReference>
<dbReference type="EMBL" id="AJ242533">
    <property type="protein sequence ID" value="CAC21704.2"/>
    <property type="status" value="JOINED"/>
    <property type="molecule type" value="Genomic_DNA"/>
</dbReference>
<dbReference type="EMBL" id="AJ297311">
    <property type="protein sequence ID" value="CAC21704.2"/>
    <property type="status" value="JOINED"/>
    <property type="molecule type" value="Genomic_DNA"/>
</dbReference>
<dbReference type="EMBL" id="AJ297313">
    <property type="protein sequence ID" value="CAC21704.2"/>
    <property type="status" value="JOINED"/>
    <property type="molecule type" value="Genomic_DNA"/>
</dbReference>
<dbReference type="EMBL" id="AJ297315">
    <property type="protein sequence ID" value="CAC21704.2"/>
    <property type="status" value="JOINED"/>
    <property type="molecule type" value="Genomic_DNA"/>
</dbReference>
<dbReference type="EMBL" id="AJ297316">
    <property type="protein sequence ID" value="CAC21704.2"/>
    <property type="status" value="JOINED"/>
    <property type="molecule type" value="Genomic_DNA"/>
</dbReference>
<dbReference type="EMBL" id="AJ297314">
    <property type="protein sequence ID" value="CAC21704.2"/>
    <property type="status" value="JOINED"/>
    <property type="molecule type" value="Genomic_DNA"/>
</dbReference>
<dbReference type="EMBL" id="AJ297312">
    <property type="protein sequence ID" value="CAC21704.2"/>
    <property type="status" value="JOINED"/>
    <property type="molecule type" value="Genomic_DNA"/>
</dbReference>
<dbReference type="EMBL" id="AJ242728">
    <property type="protein sequence ID" value="CAC21704.2"/>
    <property type="status" value="JOINED"/>
    <property type="molecule type" value="Genomic_DNA"/>
</dbReference>
<dbReference type="PIR" id="I46995">
    <property type="entry name" value="I46995"/>
</dbReference>
<dbReference type="PIR" id="S33881">
    <property type="entry name" value="JN0547"/>
</dbReference>
<dbReference type="RefSeq" id="NP_001272514.1">
    <property type="nucleotide sequence ID" value="NM_001285585.1"/>
</dbReference>
<dbReference type="SMR" id="P33049"/>
<dbReference type="Allergome" id="1242">
    <property type="allergen name" value="Cap h 8"/>
</dbReference>
<dbReference type="Allergome" id="2967">
    <property type="allergen name" value="Cap h 10"/>
</dbReference>
<dbReference type="GeneID" id="100861229"/>
<dbReference type="KEGG" id="chx:100861229"/>
<dbReference type="CTD" id="282209"/>
<dbReference type="OrthoDB" id="9564348at2759"/>
<dbReference type="Proteomes" id="UP000291000">
    <property type="component" value="Unassembled WGS sequence"/>
</dbReference>
<dbReference type="Proteomes" id="UP000694566">
    <property type="component" value="Unplaced"/>
</dbReference>
<dbReference type="GO" id="GO:0005615">
    <property type="term" value="C:extracellular space"/>
    <property type="evidence" value="ECO:0007669"/>
    <property type="project" value="TreeGrafter"/>
</dbReference>
<dbReference type="GO" id="GO:0042803">
    <property type="term" value="F:protein homodimerization activity"/>
    <property type="evidence" value="ECO:0007669"/>
    <property type="project" value="TreeGrafter"/>
</dbReference>
<dbReference type="GO" id="GO:0035375">
    <property type="term" value="F:zymogen binding"/>
    <property type="evidence" value="ECO:0007669"/>
    <property type="project" value="TreeGrafter"/>
</dbReference>
<dbReference type="InterPro" id="IPR011175">
    <property type="entry name" value="Alpha-s2_casein"/>
</dbReference>
<dbReference type="InterPro" id="IPR001588">
    <property type="entry name" value="Casein"/>
</dbReference>
<dbReference type="InterPro" id="IPR031305">
    <property type="entry name" value="Casein_CS"/>
</dbReference>
<dbReference type="PANTHER" id="PTHR16656">
    <property type="entry name" value="ALPHA-S2-CASEIN-LIKE B"/>
    <property type="match status" value="1"/>
</dbReference>
<dbReference type="PANTHER" id="PTHR16656:SF5">
    <property type="entry name" value="ALPHA-S2-CASEIN-LIKE B"/>
    <property type="match status" value="1"/>
</dbReference>
<dbReference type="Pfam" id="PF00363">
    <property type="entry name" value="Casein"/>
    <property type="match status" value="1"/>
</dbReference>
<dbReference type="PIRSF" id="PIRSF002371">
    <property type="entry name" value="Alpha-s2-casein"/>
    <property type="match status" value="1"/>
</dbReference>
<dbReference type="PROSITE" id="PS00306">
    <property type="entry name" value="CASEIN_ALPHA_BETA"/>
    <property type="match status" value="1"/>
</dbReference>
<reference key="1">
    <citation type="journal article" date="1993" name="Gene">
        <title>Sequence of the goat alpha s2-casein-encoding cDNA.</title>
        <authorList>
            <person name="Bouniol C."/>
        </authorList>
    </citation>
    <scope>NUCLEOTIDE SEQUENCE [MRNA]</scope>
</reference>
<reference key="2">
    <citation type="journal article" date="1993" name="Protein Seq. Data Anal.">
        <title>Characterization of goat allelic alpha-s2-caseins A and B: further evidence of the phosphorylation code of caseins.</title>
        <authorList>
            <person name="Bouniol C."/>
            <person name="Brignon G."/>
            <person name="Mahe M.-F."/>
            <person name="Printz C."/>
        </authorList>
    </citation>
    <scope>NUCLEOTIDE SEQUENCE</scope>
    <scope>VARIANT ALLELE B LYS-79</scope>
</reference>
<reference key="3">
    <citation type="journal article" date="1994" name="Anim. Genet.">
        <title>Biochemical and genetic analysis of variant C of caprine alpha s2-casein (Capra hircus).</title>
        <authorList>
            <person name="Bouniol C."/>
            <person name="Brignon G."/>
            <person name="Mahe M.-F."/>
            <person name="Printz C."/>
        </authorList>
    </citation>
    <scope>NUCLEOTIDE SEQUENCE [GENOMIC DNA]</scope>
    <scope>VARIANT ALLELE C ILE-182</scope>
</reference>
<reference key="4">
    <citation type="journal article" date="2001" name="Anim. Genet.">
        <title>Characterization of two new alleles at the goat CSN1S2 locus.</title>
        <authorList>
            <person name="Ramunno L."/>
            <person name="Cosenza G."/>
            <person name="Pappalardo M."/>
            <person name="Longobardi E."/>
            <person name="Gallo D."/>
            <person name="Pastore N."/>
            <person name="Di Gregorio P."/>
            <person name="Rando A."/>
        </authorList>
    </citation>
    <scope>NUCLEOTIDE SEQUENCE [MRNA]</scope>
    <scope>VARIANT ALLELE F ILE-22</scope>
</reference>
<reference key="5">
    <citation type="journal article" date="2001" name="Anim. Genet.">
        <title>Molecular genetic characterization of the goat s2-casein E allele.</title>
        <authorList>
            <person name="Lagonigro R."/>
            <person name="Pietrola E."/>
            <person name="D'Andrea M."/>
            <person name="Veltri C."/>
            <person name="Pilla F."/>
        </authorList>
    </citation>
    <scope>NUCLEOTIDE SEQUENCE [GENOMIC DNA / MRNA]</scope>
    <scope>VARIANTS ILE-182 AND ARG-208</scope>
</reference>